<organism>
    <name type="scientific">Borrelia hermsii (strain HS1 / DAH)</name>
    <dbReference type="NCBI Taxonomy" id="314723"/>
    <lineage>
        <taxon>Bacteria</taxon>
        <taxon>Pseudomonadati</taxon>
        <taxon>Spirochaetota</taxon>
        <taxon>Spirochaetia</taxon>
        <taxon>Spirochaetales</taxon>
        <taxon>Borreliaceae</taxon>
        <taxon>Borrelia</taxon>
    </lineage>
</organism>
<evidence type="ECO:0000255" key="1">
    <source>
        <dbReference type="HAMAP-Rule" id="MF_00121"/>
    </source>
</evidence>
<comment type="function">
    <text evidence="1">Allows the formation of correctly charged Asn-tRNA(Asn) or Gln-tRNA(Gln) through the transamidation of misacylated Asp-tRNA(Asn) or Glu-tRNA(Gln) in organisms which lack either or both of asparaginyl-tRNA or glutaminyl-tRNA synthetases. The reaction takes place in the presence of glutamine and ATP through an activated phospho-Asp-tRNA(Asn) or phospho-Glu-tRNA(Gln).</text>
</comment>
<comment type="catalytic activity">
    <reaction evidence="1">
        <text>L-glutamyl-tRNA(Gln) + L-glutamine + ATP + H2O = L-glutaminyl-tRNA(Gln) + L-glutamate + ADP + phosphate + H(+)</text>
        <dbReference type="Rhea" id="RHEA:17521"/>
        <dbReference type="Rhea" id="RHEA-COMP:9681"/>
        <dbReference type="Rhea" id="RHEA-COMP:9684"/>
        <dbReference type="ChEBI" id="CHEBI:15377"/>
        <dbReference type="ChEBI" id="CHEBI:15378"/>
        <dbReference type="ChEBI" id="CHEBI:29985"/>
        <dbReference type="ChEBI" id="CHEBI:30616"/>
        <dbReference type="ChEBI" id="CHEBI:43474"/>
        <dbReference type="ChEBI" id="CHEBI:58359"/>
        <dbReference type="ChEBI" id="CHEBI:78520"/>
        <dbReference type="ChEBI" id="CHEBI:78521"/>
        <dbReference type="ChEBI" id="CHEBI:456216"/>
    </reaction>
</comment>
<comment type="catalytic activity">
    <reaction evidence="1">
        <text>L-aspartyl-tRNA(Asn) + L-glutamine + ATP + H2O = L-asparaginyl-tRNA(Asn) + L-glutamate + ADP + phosphate + 2 H(+)</text>
        <dbReference type="Rhea" id="RHEA:14513"/>
        <dbReference type="Rhea" id="RHEA-COMP:9674"/>
        <dbReference type="Rhea" id="RHEA-COMP:9677"/>
        <dbReference type="ChEBI" id="CHEBI:15377"/>
        <dbReference type="ChEBI" id="CHEBI:15378"/>
        <dbReference type="ChEBI" id="CHEBI:29985"/>
        <dbReference type="ChEBI" id="CHEBI:30616"/>
        <dbReference type="ChEBI" id="CHEBI:43474"/>
        <dbReference type="ChEBI" id="CHEBI:58359"/>
        <dbReference type="ChEBI" id="CHEBI:78515"/>
        <dbReference type="ChEBI" id="CHEBI:78516"/>
        <dbReference type="ChEBI" id="CHEBI:456216"/>
    </reaction>
</comment>
<comment type="subunit">
    <text evidence="1">Heterotrimer of A, B and C subunits.</text>
</comment>
<comment type="similarity">
    <text evidence="1">Belongs to the GatB/GatE family. GatB subfamily.</text>
</comment>
<feature type="chain" id="PRO_1000095186" description="Aspartyl/glutamyl-tRNA(Asn/Gln) amidotransferase subunit B">
    <location>
        <begin position="1"/>
        <end position="485"/>
    </location>
</feature>
<protein>
    <recommendedName>
        <fullName evidence="1">Aspartyl/glutamyl-tRNA(Asn/Gln) amidotransferase subunit B</fullName>
        <shortName evidence="1">Asp/Glu-ADT subunit B</shortName>
        <ecNumber evidence="1">6.3.5.-</ecNumber>
    </recommendedName>
</protein>
<accession>B2S048</accession>
<keyword id="KW-0067">ATP-binding</keyword>
<keyword id="KW-0436">Ligase</keyword>
<keyword id="KW-0547">Nucleotide-binding</keyword>
<keyword id="KW-0648">Protein biosynthesis</keyword>
<proteinExistence type="inferred from homology"/>
<reference key="1">
    <citation type="submission" date="2004-12" db="EMBL/GenBank/DDBJ databases">
        <title>The genome sequence of Borrelia hermsii and Borrelia turicatae: comparative analysis of two agents of endemic N. America relapsing fever.</title>
        <authorList>
            <person name="Porcella S.F."/>
            <person name="Raffel S.J."/>
            <person name="Schrumpf M.E."/>
            <person name="Montgomery B."/>
            <person name="Smith T."/>
            <person name="Schwan T.G."/>
        </authorList>
    </citation>
    <scope>NUCLEOTIDE SEQUENCE [LARGE SCALE GENOMIC DNA]</scope>
    <source>
        <strain>HS1 / DAH</strain>
    </source>
</reference>
<gene>
    <name evidence="1" type="primary">gatB</name>
    <name type="ordered locus">BH0341</name>
</gene>
<name>GATB_BORHD</name>
<sequence length="485" mass="55054">MEYRLLVGLEVHVQLGLKTKAFCGCKNDFGGIPNSRTCPTCLGLPGALPSVNKELINSAILAGHATNSKIRNIVKFDRKHYVYPDLPKGYQISQNDAPICNNGFIFIETSSGLKKINIVRIHMEEDSGKSLHLLESENRSYIDFNRAGAPLLEIVSEPDINSGEEAVAYLNSLREIFRYLDLSDCSMENGSFRCDVNVNLLINENDVEYKTPISEIKNLNSFKSIKLAIDYEESRQKEEWILHRKTFESIGKHTMGFDDKRGITVFQRSKETVADYRYIKDPDLPLIKLDDVYIESIKSNKMVELPLDTRIRLKEQYGLSNFDVVTLTSDKNLVKYFEEAAMTSSDPKRVSNWILSEVLSVLNDREISILDFNLPPSYISELVEFIVSGKVSGKIAKEIFLEMLKRNVSPAIIINEKNLEQISDKSFIESVVLEVLNENPKSIELYKKGKSHAIKFMMGQIMLKTSGRVNPAFANEILMNKLRDV</sequence>
<dbReference type="EC" id="6.3.5.-" evidence="1"/>
<dbReference type="EMBL" id="CP000048">
    <property type="protein sequence ID" value="AAX16854.1"/>
    <property type="molecule type" value="Genomic_DNA"/>
</dbReference>
<dbReference type="RefSeq" id="WP_012422111.1">
    <property type="nucleotide sequence ID" value="NZ_CP073136.1"/>
</dbReference>
<dbReference type="SMR" id="B2S048"/>
<dbReference type="GeneID" id="71843151"/>
<dbReference type="KEGG" id="bhr:BH0341"/>
<dbReference type="HOGENOM" id="CLU_019240_0_0_12"/>
<dbReference type="Proteomes" id="UP000008834">
    <property type="component" value="Chromosome"/>
</dbReference>
<dbReference type="GO" id="GO:0050566">
    <property type="term" value="F:asparaginyl-tRNA synthase (glutamine-hydrolyzing) activity"/>
    <property type="evidence" value="ECO:0007669"/>
    <property type="project" value="RHEA"/>
</dbReference>
<dbReference type="GO" id="GO:0005524">
    <property type="term" value="F:ATP binding"/>
    <property type="evidence" value="ECO:0007669"/>
    <property type="project" value="UniProtKB-KW"/>
</dbReference>
<dbReference type="GO" id="GO:0050567">
    <property type="term" value="F:glutaminyl-tRNA synthase (glutamine-hydrolyzing) activity"/>
    <property type="evidence" value="ECO:0007669"/>
    <property type="project" value="UniProtKB-UniRule"/>
</dbReference>
<dbReference type="GO" id="GO:0070681">
    <property type="term" value="P:glutaminyl-tRNAGln biosynthesis via transamidation"/>
    <property type="evidence" value="ECO:0007669"/>
    <property type="project" value="TreeGrafter"/>
</dbReference>
<dbReference type="GO" id="GO:0006412">
    <property type="term" value="P:translation"/>
    <property type="evidence" value="ECO:0007669"/>
    <property type="project" value="UniProtKB-UniRule"/>
</dbReference>
<dbReference type="FunFam" id="1.10.10.410:FF:000001">
    <property type="entry name" value="Aspartyl/glutamyl-tRNA(Asn/Gln) amidotransferase subunit B"/>
    <property type="match status" value="1"/>
</dbReference>
<dbReference type="Gene3D" id="1.10.10.410">
    <property type="match status" value="1"/>
</dbReference>
<dbReference type="HAMAP" id="MF_00121">
    <property type="entry name" value="GatB"/>
    <property type="match status" value="1"/>
</dbReference>
<dbReference type="InterPro" id="IPR017959">
    <property type="entry name" value="Asn/Gln-tRNA_amidoTrfase_suB/E"/>
</dbReference>
<dbReference type="InterPro" id="IPR006075">
    <property type="entry name" value="Asn/Gln-tRNA_Trfase_suB/E_cat"/>
</dbReference>
<dbReference type="InterPro" id="IPR018027">
    <property type="entry name" value="Asn/Gln_amidotransferase"/>
</dbReference>
<dbReference type="InterPro" id="IPR003789">
    <property type="entry name" value="Asn/Gln_tRNA_amidoTrase-B-like"/>
</dbReference>
<dbReference type="InterPro" id="IPR004413">
    <property type="entry name" value="GatB"/>
</dbReference>
<dbReference type="InterPro" id="IPR023168">
    <property type="entry name" value="GatB_Yqey_C_2"/>
</dbReference>
<dbReference type="InterPro" id="IPR017958">
    <property type="entry name" value="Gln-tRNA_amidoTrfase_suB_CS"/>
</dbReference>
<dbReference type="InterPro" id="IPR014746">
    <property type="entry name" value="Gln_synth/guanido_kin_cat_dom"/>
</dbReference>
<dbReference type="NCBIfam" id="TIGR00133">
    <property type="entry name" value="gatB"/>
    <property type="match status" value="1"/>
</dbReference>
<dbReference type="NCBIfam" id="NF004012">
    <property type="entry name" value="PRK05477.1-2"/>
    <property type="match status" value="1"/>
</dbReference>
<dbReference type="NCBIfam" id="NF004014">
    <property type="entry name" value="PRK05477.1-4"/>
    <property type="match status" value="1"/>
</dbReference>
<dbReference type="PANTHER" id="PTHR11659">
    <property type="entry name" value="GLUTAMYL-TRNA GLN AMIDOTRANSFERASE SUBUNIT B MITOCHONDRIAL AND PROKARYOTIC PET112-RELATED"/>
    <property type="match status" value="1"/>
</dbReference>
<dbReference type="PANTHER" id="PTHR11659:SF0">
    <property type="entry name" value="GLUTAMYL-TRNA(GLN) AMIDOTRANSFERASE SUBUNIT B, MITOCHONDRIAL"/>
    <property type="match status" value="1"/>
</dbReference>
<dbReference type="Pfam" id="PF02934">
    <property type="entry name" value="GatB_N"/>
    <property type="match status" value="1"/>
</dbReference>
<dbReference type="Pfam" id="PF02637">
    <property type="entry name" value="GatB_Yqey"/>
    <property type="match status" value="1"/>
</dbReference>
<dbReference type="SMART" id="SM00845">
    <property type="entry name" value="GatB_Yqey"/>
    <property type="match status" value="1"/>
</dbReference>
<dbReference type="SUPFAM" id="SSF89095">
    <property type="entry name" value="GatB/YqeY motif"/>
    <property type="match status" value="1"/>
</dbReference>
<dbReference type="SUPFAM" id="SSF55931">
    <property type="entry name" value="Glutamine synthetase/guanido kinase"/>
    <property type="match status" value="1"/>
</dbReference>
<dbReference type="PROSITE" id="PS01234">
    <property type="entry name" value="GATB"/>
    <property type="match status" value="1"/>
</dbReference>